<dbReference type="EMBL" id="AL022118">
    <property type="protein sequence ID" value="CAA17952.1"/>
    <property type="molecule type" value="Genomic_DNA"/>
</dbReference>
<dbReference type="EMBL" id="AL583926">
    <property type="protein sequence ID" value="CAC32215.1"/>
    <property type="molecule type" value="Genomic_DNA"/>
</dbReference>
<dbReference type="PIR" id="A87245">
    <property type="entry name" value="A87245"/>
</dbReference>
<dbReference type="RefSeq" id="NP_302711.1">
    <property type="nucleotide sequence ID" value="NC_002677.1"/>
</dbReference>
<dbReference type="RefSeq" id="WP_010909030.1">
    <property type="nucleotide sequence ID" value="NC_002677.1"/>
</dbReference>
<dbReference type="SMR" id="O53125"/>
<dbReference type="STRING" id="272631.gene:17576549"/>
<dbReference type="KEGG" id="mle:ML2683"/>
<dbReference type="PATRIC" id="fig|272631.5.peg.5175"/>
<dbReference type="Leproma" id="ML2683"/>
<dbReference type="eggNOG" id="COG0238">
    <property type="taxonomic scope" value="Bacteria"/>
</dbReference>
<dbReference type="HOGENOM" id="CLU_148710_2_2_11"/>
<dbReference type="OrthoDB" id="9812008at2"/>
<dbReference type="Proteomes" id="UP000000806">
    <property type="component" value="Chromosome"/>
</dbReference>
<dbReference type="GO" id="GO:0022627">
    <property type="term" value="C:cytosolic small ribosomal subunit"/>
    <property type="evidence" value="ECO:0007669"/>
    <property type="project" value="TreeGrafter"/>
</dbReference>
<dbReference type="GO" id="GO:0070181">
    <property type="term" value="F:small ribosomal subunit rRNA binding"/>
    <property type="evidence" value="ECO:0007669"/>
    <property type="project" value="TreeGrafter"/>
</dbReference>
<dbReference type="GO" id="GO:0003735">
    <property type="term" value="F:structural constituent of ribosome"/>
    <property type="evidence" value="ECO:0007669"/>
    <property type="project" value="InterPro"/>
</dbReference>
<dbReference type="GO" id="GO:0006412">
    <property type="term" value="P:translation"/>
    <property type="evidence" value="ECO:0007669"/>
    <property type="project" value="UniProtKB-UniRule"/>
</dbReference>
<dbReference type="FunFam" id="4.10.640.10:FF:000004">
    <property type="entry name" value="30S ribosomal protein S18"/>
    <property type="match status" value="1"/>
</dbReference>
<dbReference type="Gene3D" id="4.10.640.10">
    <property type="entry name" value="Ribosomal protein S18"/>
    <property type="match status" value="1"/>
</dbReference>
<dbReference type="HAMAP" id="MF_00270">
    <property type="entry name" value="Ribosomal_bS18"/>
    <property type="match status" value="1"/>
</dbReference>
<dbReference type="InterPro" id="IPR001648">
    <property type="entry name" value="Ribosomal_bS18"/>
</dbReference>
<dbReference type="InterPro" id="IPR018275">
    <property type="entry name" value="Ribosomal_bS18_CS"/>
</dbReference>
<dbReference type="InterPro" id="IPR036870">
    <property type="entry name" value="Ribosomal_bS18_sf"/>
</dbReference>
<dbReference type="NCBIfam" id="TIGR00165">
    <property type="entry name" value="S18"/>
    <property type="match status" value="1"/>
</dbReference>
<dbReference type="PANTHER" id="PTHR13479">
    <property type="entry name" value="30S RIBOSOMAL PROTEIN S18"/>
    <property type="match status" value="1"/>
</dbReference>
<dbReference type="PANTHER" id="PTHR13479:SF62">
    <property type="entry name" value="SMALL RIBOSOMAL SUBUNIT PROTEIN BS18A"/>
    <property type="match status" value="1"/>
</dbReference>
<dbReference type="Pfam" id="PF01084">
    <property type="entry name" value="Ribosomal_S18"/>
    <property type="match status" value="1"/>
</dbReference>
<dbReference type="PRINTS" id="PR00974">
    <property type="entry name" value="RIBOSOMALS18"/>
</dbReference>
<dbReference type="SUPFAM" id="SSF46911">
    <property type="entry name" value="Ribosomal protein S18"/>
    <property type="match status" value="1"/>
</dbReference>
<dbReference type="PROSITE" id="PS00057">
    <property type="entry name" value="RIBOSOMAL_S18"/>
    <property type="match status" value="1"/>
</dbReference>
<accession>O53125</accession>
<protein>
    <recommendedName>
        <fullName evidence="1">Small ribosomal subunit protein bS18</fullName>
    </recommendedName>
    <alternativeName>
        <fullName evidence="2">30S ribosomal protein S18</fullName>
    </alternativeName>
</protein>
<sequence length="84" mass="9557">MAKSTKRRPAPEKPAKARKCVFCAKKNQQIDYKDTTLLRTYISERGKIRARRVTGNCVQHQRDIAIAVKNAREVALLPFTSSAR</sequence>
<evidence type="ECO:0000255" key="1">
    <source>
        <dbReference type="HAMAP-Rule" id="MF_00270"/>
    </source>
</evidence>
<evidence type="ECO:0000305" key="2"/>
<keyword id="KW-1185">Reference proteome</keyword>
<keyword id="KW-0687">Ribonucleoprotein</keyword>
<keyword id="KW-0689">Ribosomal protein</keyword>
<keyword id="KW-0694">RNA-binding</keyword>
<keyword id="KW-0699">rRNA-binding</keyword>
<gene>
    <name evidence="1" type="primary">rpsR</name>
    <name type="ordered locus">ML2683</name>
    <name type="ORF">MLCB1913.19c</name>
</gene>
<feature type="chain" id="PRO_0000111182" description="Small ribosomal subunit protein bS18">
    <location>
        <begin position="1"/>
        <end position="84"/>
    </location>
</feature>
<proteinExistence type="inferred from homology"/>
<name>RS18_MYCLE</name>
<comment type="function">
    <text evidence="1">Binds as a heterodimer with protein bS6 to the central domain of the 16S rRNA, where it helps stabilize the platform of the 30S subunit.</text>
</comment>
<comment type="subunit">
    <text evidence="1">Part of the 30S ribosomal subunit. Forms a tight heterodimer with protein bS6.</text>
</comment>
<comment type="similarity">
    <text evidence="1">Belongs to the bacterial ribosomal protein bS18 family.</text>
</comment>
<reference key="1">
    <citation type="journal article" date="2001" name="Nature">
        <title>Massive gene decay in the leprosy bacillus.</title>
        <authorList>
            <person name="Cole S.T."/>
            <person name="Eiglmeier K."/>
            <person name="Parkhill J."/>
            <person name="James K.D."/>
            <person name="Thomson N.R."/>
            <person name="Wheeler P.R."/>
            <person name="Honore N."/>
            <person name="Garnier T."/>
            <person name="Churcher C.M."/>
            <person name="Harris D.E."/>
            <person name="Mungall K.L."/>
            <person name="Basham D."/>
            <person name="Brown D."/>
            <person name="Chillingworth T."/>
            <person name="Connor R."/>
            <person name="Davies R.M."/>
            <person name="Devlin K."/>
            <person name="Duthoy S."/>
            <person name="Feltwell T."/>
            <person name="Fraser A."/>
            <person name="Hamlin N."/>
            <person name="Holroyd S."/>
            <person name="Hornsby T."/>
            <person name="Jagels K."/>
            <person name="Lacroix C."/>
            <person name="Maclean J."/>
            <person name="Moule S."/>
            <person name="Murphy L.D."/>
            <person name="Oliver K."/>
            <person name="Quail M.A."/>
            <person name="Rajandream M.A."/>
            <person name="Rutherford K.M."/>
            <person name="Rutter S."/>
            <person name="Seeger K."/>
            <person name="Simon S."/>
            <person name="Simmonds M."/>
            <person name="Skelton J."/>
            <person name="Squares R."/>
            <person name="Squares S."/>
            <person name="Stevens K."/>
            <person name="Taylor K."/>
            <person name="Whitehead S."/>
            <person name="Woodward J.R."/>
            <person name="Barrell B.G."/>
        </authorList>
    </citation>
    <scope>NUCLEOTIDE SEQUENCE [LARGE SCALE GENOMIC DNA]</scope>
    <source>
        <strain>TN</strain>
    </source>
</reference>
<organism>
    <name type="scientific">Mycobacterium leprae (strain TN)</name>
    <dbReference type="NCBI Taxonomy" id="272631"/>
    <lineage>
        <taxon>Bacteria</taxon>
        <taxon>Bacillati</taxon>
        <taxon>Actinomycetota</taxon>
        <taxon>Actinomycetes</taxon>
        <taxon>Mycobacteriales</taxon>
        <taxon>Mycobacteriaceae</taxon>
        <taxon>Mycobacterium</taxon>
    </lineage>
</organism>